<comment type="function">
    <text evidence="1">Major role in the synthesis of nucleoside triphosphates other than ATP. The ATP gamma phosphate is transferred to the NDP beta phosphate via a ping-pong mechanism, using a phosphorylated active-site intermediate.</text>
</comment>
<comment type="catalytic activity">
    <reaction evidence="1">
        <text>a 2'-deoxyribonucleoside 5'-diphosphate + ATP = a 2'-deoxyribonucleoside 5'-triphosphate + ADP</text>
        <dbReference type="Rhea" id="RHEA:44640"/>
        <dbReference type="ChEBI" id="CHEBI:30616"/>
        <dbReference type="ChEBI" id="CHEBI:61560"/>
        <dbReference type="ChEBI" id="CHEBI:73316"/>
        <dbReference type="ChEBI" id="CHEBI:456216"/>
        <dbReference type="EC" id="2.7.4.6"/>
    </reaction>
</comment>
<comment type="catalytic activity">
    <reaction evidence="1">
        <text>a ribonucleoside 5'-diphosphate + ATP = a ribonucleoside 5'-triphosphate + ADP</text>
        <dbReference type="Rhea" id="RHEA:18113"/>
        <dbReference type="ChEBI" id="CHEBI:30616"/>
        <dbReference type="ChEBI" id="CHEBI:57930"/>
        <dbReference type="ChEBI" id="CHEBI:61557"/>
        <dbReference type="ChEBI" id="CHEBI:456216"/>
        <dbReference type="EC" id="2.7.4.6"/>
    </reaction>
</comment>
<comment type="cofactor">
    <cofactor evidence="1">
        <name>Mg(2+)</name>
        <dbReference type="ChEBI" id="CHEBI:18420"/>
    </cofactor>
</comment>
<comment type="subunit">
    <text evidence="1">Homotetramer.</text>
</comment>
<comment type="subcellular location">
    <subcellularLocation>
        <location evidence="1">Cytoplasm</location>
    </subcellularLocation>
</comment>
<comment type="similarity">
    <text evidence="1">Belongs to the NDK family.</text>
</comment>
<proteinExistence type="inferred from homology"/>
<accession>Q2YY87</accession>
<name>NDK_STAAB</name>
<sequence>MERTFLMIKPDAVQRNLIGEVISRIERKGLKLVGGKLMQVPMELAETHYGEHQGKPFYNDLISFITSAPVFAMVVEGEDAVNVSRHIIGSTNPSEASPGSIRGDLGLTVGRNIIHGSDSLESAEREINLWFNENEITSYASPRDAWLYE</sequence>
<reference key="1">
    <citation type="journal article" date="2007" name="PLoS ONE">
        <title>Molecular correlates of host specialization in Staphylococcus aureus.</title>
        <authorList>
            <person name="Herron-Olson L."/>
            <person name="Fitzgerald J.R."/>
            <person name="Musser J.M."/>
            <person name="Kapur V."/>
        </authorList>
    </citation>
    <scope>NUCLEOTIDE SEQUENCE [LARGE SCALE GENOMIC DNA]</scope>
    <source>
        <strain>bovine RF122 / ET3-1</strain>
    </source>
</reference>
<dbReference type="EC" id="2.7.4.6" evidence="1"/>
<dbReference type="EMBL" id="AJ938182">
    <property type="protein sequence ID" value="CAI81020.1"/>
    <property type="molecule type" value="Genomic_DNA"/>
</dbReference>
<dbReference type="RefSeq" id="WP_000442480.1">
    <property type="nucleotide sequence ID" value="NC_007622.1"/>
</dbReference>
<dbReference type="SMR" id="Q2YY87"/>
<dbReference type="GeneID" id="66839658"/>
<dbReference type="KEGG" id="sab:SAB1331c"/>
<dbReference type="HOGENOM" id="CLU_060216_6_3_9"/>
<dbReference type="GO" id="GO:0005737">
    <property type="term" value="C:cytoplasm"/>
    <property type="evidence" value="ECO:0007669"/>
    <property type="project" value="UniProtKB-SubCell"/>
</dbReference>
<dbReference type="GO" id="GO:0005524">
    <property type="term" value="F:ATP binding"/>
    <property type="evidence" value="ECO:0007669"/>
    <property type="project" value="UniProtKB-UniRule"/>
</dbReference>
<dbReference type="GO" id="GO:0046872">
    <property type="term" value="F:metal ion binding"/>
    <property type="evidence" value="ECO:0007669"/>
    <property type="project" value="UniProtKB-KW"/>
</dbReference>
<dbReference type="GO" id="GO:0004550">
    <property type="term" value="F:nucleoside diphosphate kinase activity"/>
    <property type="evidence" value="ECO:0007669"/>
    <property type="project" value="UniProtKB-UniRule"/>
</dbReference>
<dbReference type="GO" id="GO:0006241">
    <property type="term" value="P:CTP biosynthetic process"/>
    <property type="evidence" value="ECO:0007669"/>
    <property type="project" value="UniProtKB-UniRule"/>
</dbReference>
<dbReference type="GO" id="GO:0006183">
    <property type="term" value="P:GTP biosynthetic process"/>
    <property type="evidence" value="ECO:0007669"/>
    <property type="project" value="UniProtKB-UniRule"/>
</dbReference>
<dbReference type="GO" id="GO:0006228">
    <property type="term" value="P:UTP biosynthetic process"/>
    <property type="evidence" value="ECO:0007669"/>
    <property type="project" value="UniProtKB-UniRule"/>
</dbReference>
<dbReference type="CDD" id="cd04413">
    <property type="entry name" value="NDPk_I"/>
    <property type="match status" value="1"/>
</dbReference>
<dbReference type="FunFam" id="3.30.70.141:FF:000002">
    <property type="entry name" value="Nucleoside diphosphate kinase"/>
    <property type="match status" value="1"/>
</dbReference>
<dbReference type="Gene3D" id="3.30.70.141">
    <property type="entry name" value="Nucleoside diphosphate kinase-like domain"/>
    <property type="match status" value="1"/>
</dbReference>
<dbReference type="HAMAP" id="MF_00451">
    <property type="entry name" value="NDP_kinase"/>
    <property type="match status" value="1"/>
</dbReference>
<dbReference type="InterPro" id="IPR034907">
    <property type="entry name" value="NDK-like_dom"/>
</dbReference>
<dbReference type="InterPro" id="IPR036850">
    <property type="entry name" value="NDK-like_dom_sf"/>
</dbReference>
<dbReference type="InterPro" id="IPR001564">
    <property type="entry name" value="Nucleoside_diP_kinase"/>
</dbReference>
<dbReference type="InterPro" id="IPR023005">
    <property type="entry name" value="Nucleoside_diP_kinase_AS"/>
</dbReference>
<dbReference type="NCBIfam" id="NF001908">
    <property type="entry name" value="PRK00668.1"/>
    <property type="match status" value="1"/>
</dbReference>
<dbReference type="PANTHER" id="PTHR11349">
    <property type="entry name" value="NUCLEOSIDE DIPHOSPHATE KINASE"/>
    <property type="match status" value="1"/>
</dbReference>
<dbReference type="Pfam" id="PF00334">
    <property type="entry name" value="NDK"/>
    <property type="match status" value="1"/>
</dbReference>
<dbReference type="PRINTS" id="PR01243">
    <property type="entry name" value="NUCDPKINASE"/>
</dbReference>
<dbReference type="SMART" id="SM00562">
    <property type="entry name" value="NDK"/>
    <property type="match status" value="1"/>
</dbReference>
<dbReference type="SUPFAM" id="SSF54919">
    <property type="entry name" value="Nucleoside diphosphate kinase, NDK"/>
    <property type="match status" value="1"/>
</dbReference>
<dbReference type="PROSITE" id="PS00469">
    <property type="entry name" value="NDPK"/>
    <property type="match status" value="1"/>
</dbReference>
<dbReference type="PROSITE" id="PS51374">
    <property type="entry name" value="NDPK_LIKE"/>
    <property type="match status" value="1"/>
</dbReference>
<organism>
    <name type="scientific">Staphylococcus aureus (strain bovine RF122 / ET3-1)</name>
    <dbReference type="NCBI Taxonomy" id="273036"/>
    <lineage>
        <taxon>Bacteria</taxon>
        <taxon>Bacillati</taxon>
        <taxon>Bacillota</taxon>
        <taxon>Bacilli</taxon>
        <taxon>Bacillales</taxon>
        <taxon>Staphylococcaceae</taxon>
        <taxon>Staphylococcus</taxon>
    </lineage>
</organism>
<feature type="chain" id="PRO_0000226580" description="Nucleoside diphosphate kinase">
    <location>
        <begin position="1"/>
        <end position="149"/>
    </location>
</feature>
<feature type="active site" description="Pros-phosphohistidine intermediate" evidence="1">
    <location>
        <position position="115"/>
    </location>
</feature>
<feature type="binding site" evidence="1">
    <location>
        <position position="9"/>
    </location>
    <ligand>
        <name>ATP</name>
        <dbReference type="ChEBI" id="CHEBI:30616"/>
    </ligand>
</feature>
<feature type="binding site" evidence="1">
    <location>
        <position position="57"/>
    </location>
    <ligand>
        <name>ATP</name>
        <dbReference type="ChEBI" id="CHEBI:30616"/>
    </ligand>
</feature>
<feature type="binding site" evidence="1">
    <location>
        <position position="85"/>
    </location>
    <ligand>
        <name>ATP</name>
        <dbReference type="ChEBI" id="CHEBI:30616"/>
    </ligand>
</feature>
<feature type="binding site" evidence="1">
    <location>
        <position position="91"/>
    </location>
    <ligand>
        <name>ATP</name>
        <dbReference type="ChEBI" id="CHEBI:30616"/>
    </ligand>
</feature>
<feature type="binding site" evidence="1">
    <location>
        <position position="102"/>
    </location>
    <ligand>
        <name>ATP</name>
        <dbReference type="ChEBI" id="CHEBI:30616"/>
    </ligand>
</feature>
<feature type="binding site" evidence="1">
    <location>
        <position position="112"/>
    </location>
    <ligand>
        <name>ATP</name>
        <dbReference type="ChEBI" id="CHEBI:30616"/>
    </ligand>
</feature>
<protein>
    <recommendedName>
        <fullName evidence="1">Nucleoside diphosphate kinase</fullName>
        <shortName evidence="1">NDK</shortName>
        <shortName evidence="1">NDP kinase</shortName>
        <ecNumber evidence="1">2.7.4.6</ecNumber>
    </recommendedName>
    <alternativeName>
        <fullName evidence="1">Nucleoside-2-P kinase</fullName>
    </alternativeName>
</protein>
<evidence type="ECO:0000255" key="1">
    <source>
        <dbReference type="HAMAP-Rule" id="MF_00451"/>
    </source>
</evidence>
<gene>
    <name evidence="1" type="primary">ndk</name>
    <name type="ordered locus">SAB1331c</name>
</gene>
<keyword id="KW-0067">ATP-binding</keyword>
<keyword id="KW-0963">Cytoplasm</keyword>
<keyword id="KW-0418">Kinase</keyword>
<keyword id="KW-0460">Magnesium</keyword>
<keyword id="KW-0479">Metal-binding</keyword>
<keyword id="KW-0546">Nucleotide metabolism</keyword>
<keyword id="KW-0547">Nucleotide-binding</keyword>
<keyword id="KW-0597">Phosphoprotein</keyword>
<keyword id="KW-0808">Transferase</keyword>